<dbReference type="EC" id="1.1.1.25" evidence="1"/>
<dbReference type="EMBL" id="AE014075">
    <property type="protein sequence ID" value="AAN82480.1"/>
    <property type="molecule type" value="Genomic_DNA"/>
</dbReference>
<dbReference type="RefSeq" id="WP_000451246.1">
    <property type="nucleotide sequence ID" value="NZ_CP051263.1"/>
</dbReference>
<dbReference type="SMR" id="Q8FD18"/>
<dbReference type="STRING" id="199310.c4042"/>
<dbReference type="KEGG" id="ecc:c4042"/>
<dbReference type="eggNOG" id="COG0169">
    <property type="taxonomic scope" value="Bacteria"/>
</dbReference>
<dbReference type="HOGENOM" id="CLU_044063_2_1_6"/>
<dbReference type="BioCyc" id="ECOL199310:C4042-MONOMER"/>
<dbReference type="UniPathway" id="UPA00053">
    <property type="reaction ID" value="UER00087"/>
</dbReference>
<dbReference type="Proteomes" id="UP000001410">
    <property type="component" value="Chromosome"/>
</dbReference>
<dbReference type="GO" id="GO:0005829">
    <property type="term" value="C:cytosol"/>
    <property type="evidence" value="ECO:0007669"/>
    <property type="project" value="TreeGrafter"/>
</dbReference>
<dbReference type="GO" id="GO:0050661">
    <property type="term" value="F:NADP binding"/>
    <property type="evidence" value="ECO:0007669"/>
    <property type="project" value="InterPro"/>
</dbReference>
<dbReference type="GO" id="GO:0004764">
    <property type="term" value="F:shikimate 3-dehydrogenase (NADP+) activity"/>
    <property type="evidence" value="ECO:0007669"/>
    <property type="project" value="UniProtKB-UniRule"/>
</dbReference>
<dbReference type="GO" id="GO:0008652">
    <property type="term" value="P:amino acid biosynthetic process"/>
    <property type="evidence" value="ECO:0007669"/>
    <property type="project" value="UniProtKB-KW"/>
</dbReference>
<dbReference type="GO" id="GO:0009073">
    <property type="term" value="P:aromatic amino acid family biosynthetic process"/>
    <property type="evidence" value="ECO:0007669"/>
    <property type="project" value="UniProtKB-KW"/>
</dbReference>
<dbReference type="GO" id="GO:0009423">
    <property type="term" value="P:chorismate biosynthetic process"/>
    <property type="evidence" value="ECO:0007669"/>
    <property type="project" value="UniProtKB-UniRule"/>
</dbReference>
<dbReference type="GO" id="GO:0019632">
    <property type="term" value="P:shikimate metabolic process"/>
    <property type="evidence" value="ECO:0007669"/>
    <property type="project" value="InterPro"/>
</dbReference>
<dbReference type="CDD" id="cd01065">
    <property type="entry name" value="NAD_bind_Shikimate_DH"/>
    <property type="match status" value="1"/>
</dbReference>
<dbReference type="FunFam" id="3.40.50.10860:FF:000006">
    <property type="entry name" value="Shikimate dehydrogenase (NADP(+))"/>
    <property type="match status" value="1"/>
</dbReference>
<dbReference type="FunFam" id="3.40.50.720:FF:000104">
    <property type="entry name" value="Shikimate dehydrogenase (NADP(+))"/>
    <property type="match status" value="1"/>
</dbReference>
<dbReference type="Gene3D" id="3.40.50.10860">
    <property type="entry name" value="Leucine Dehydrogenase, chain A, domain 1"/>
    <property type="match status" value="1"/>
</dbReference>
<dbReference type="Gene3D" id="3.40.50.720">
    <property type="entry name" value="NAD(P)-binding Rossmann-like Domain"/>
    <property type="match status" value="1"/>
</dbReference>
<dbReference type="HAMAP" id="MF_00222">
    <property type="entry name" value="Shikimate_DH_AroE"/>
    <property type="match status" value="1"/>
</dbReference>
<dbReference type="InterPro" id="IPR046346">
    <property type="entry name" value="Aminoacid_DH-like_N_sf"/>
</dbReference>
<dbReference type="InterPro" id="IPR036291">
    <property type="entry name" value="NAD(P)-bd_dom_sf"/>
</dbReference>
<dbReference type="InterPro" id="IPR041121">
    <property type="entry name" value="SDH_C"/>
</dbReference>
<dbReference type="InterPro" id="IPR011342">
    <property type="entry name" value="Shikimate_DH"/>
</dbReference>
<dbReference type="InterPro" id="IPR013708">
    <property type="entry name" value="Shikimate_DH-bd_N"/>
</dbReference>
<dbReference type="InterPro" id="IPR022893">
    <property type="entry name" value="Shikimate_DH_fam"/>
</dbReference>
<dbReference type="InterPro" id="IPR006151">
    <property type="entry name" value="Shikm_DH/Glu-tRNA_Rdtase"/>
</dbReference>
<dbReference type="NCBIfam" id="TIGR00507">
    <property type="entry name" value="aroE"/>
    <property type="match status" value="1"/>
</dbReference>
<dbReference type="NCBIfam" id="NF001310">
    <property type="entry name" value="PRK00258.1-2"/>
    <property type="match status" value="1"/>
</dbReference>
<dbReference type="PANTHER" id="PTHR21089:SF1">
    <property type="entry name" value="BIFUNCTIONAL 3-DEHYDROQUINATE DEHYDRATASE_SHIKIMATE DEHYDROGENASE, CHLOROPLASTIC"/>
    <property type="match status" value="1"/>
</dbReference>
<dbReference type="PANTHER" id="PTHR21089">
    <property type="entry name" value="SHIKIMATE DEHYDROGENASE"/>
    <property type="match status" value="1"/>
</dbReference>
<dbReference type="Pfam" id="PF18317">
    <property type="entry name" value="SDH_C"/>
    <property type="match status" value="1"/>
</dbReference>
<dbReference type="Pfam" id="PF01488">
    <property type="entry name" value="Shikimate_DH"/>
    <property type="match status" value="1"/>
</dbReference>
<dbReference type="Pfam" id="PF08501">
    <property type="entry name" value="Shikimate_dh_N"/>
    <property type="match status" value="1"/>
</dbReference>
<dbReference type="SUPFAM" id="SSF53223">
    <property type="entry name" value="Aminoacid dehydrogenase-like, N-terminal domain"/>
    <property type="match status" value="1"/>
</dbReference>
<dbReference type="SUPFAM" id="SSF51735">
    <property type="entry name" value="NAD(P)-binding Rossmann-fold domains"/>
    <property type="match status" value="1"/>
</dbReference>
<accession>Q8FD18</accession>
<name>AROE_ECOL6</name>
<comment type="function">
    <text evidence="1">Involved in the biosynthesis of the chorismate, which leads to the biosynthesis of aromatic amino acids. Catalyzes the reversible NADPH linked reduction of 3-dehydroshikimate (DHSA) to yield shikimate (SA).</text>
</comment>
<comment type="catalytic activity">
    <reaction evidence="1">
        <text>shikimate + NADP(+) = 3-dehydroshikimate + NADPH + H(+)</text>
        <dbReference type="Rhea" id="RHEA:17737"/>
        <dbReference type="ChEBI" id="CHEBI:15378"/>
        <dbReference type="ChEBI" id="CHEBI:16630"/>
        <dbReference type="ChEBI" id="CHEBI:36208"/>
        <dbReference type="ChEBI" id="CHEBI:57783"/>
        <dbReference type="ChEBI" id="CHEBI:58349"/>
        <dbReference type="EC" id="1.1.1.25"/>
    </reaction>
</comment>
<comment type="pathway">
    <text evidence="1">Metabolic intermediate biosynthesis; chorismate biosynthesis; chorismate from D-erythrose 4-phosphate and phosphoenolpyruvate: step 4/7.</text>
</comment>
<comment type="subunit">
    <text evidence="1">Homodimer.</text>
</comment>
<comment type="similarity">
    <text evidence="1">Belongs to the shikimate dehydrogenase family.</text>
</comment>
<evidence type="ECO:0000255" key="1">
    <source>
        <dbReference type="HAMAP-Rule" id="MF_00222"/>
    </source>
</evidence>
<organism>
    <name type="scientific">Escherichia coli O6:H1 (strain CFT073 / ATCC 700928 / UPEC)</name>
    <dbReference type="NCBI Taxonomy" id="199310"/>
    <lineage>
        <taxon>Bacteria</taxon>
        <taxon>Pseudomonadati</taxon>
        <taxon>Pseudomonadota</taxon>
        <taxon>Gammaproteobacteria</taxon>
        <taxon>Enterobacterales</taxon>
        <taxon>Enterobacteriaceae</taxon>
        <taxon>Escherichia</taxon>
    </lineage>
</organism>
<gene>
    <name evidence="1" type="primary">aroE</name>
    <name type="ordered locus">c4042</name>
</gene>
<protein>
    <recommendedName>
        <fullName evidence="1">Shikimate dehydrogenase (NADP(+))</fullName>
        <shortName evidence="1">SDH</shortName>
        <ecNumber evidence="1">1.1.1.25</ecNumber>
    </recommendedName>
</protein>
<reference key="1">
    <citation type="journal article" date="2002" name="Proc. Natl. Acad. Sci. U.S.A.">
        <title>Extensive mosaic structure revealed by the complete genome sequence of uropathogenic Escherichia coli.</title>
        <authorList>
            <person name="Welch R.A."/>
            <person name="Burland V."/>
            <person name="Plunkett G. III"/>
            <person name="Redford P."/>
            <person name="Roesch P."/>
            <person name="Rasko D."/>
            <person name="Buckles E.L."/>
            <person name="Liou S.-R."/>
            <person name="Boutin A."/>
            <person name="Hackett J."/>
            <person name="Stroud D."/>
            <person name="Mayhew G.F."/>
            <person name="Rose D.J."/>
            <person name="Zhou S."/>
            <person name="Schwartz D.C."/>
            <person name="Perna N.T."/>
            <person name="Mobley H.L.T."/>
            <person name="Donnenberg M.S."/>
            <person name="Blattner F.R."/>
        </authorList>
    </citation>
    <scope>NUCLEOTIDE SEQUENCE [LARGE SCALE GENOMIC DNA]</scope>
    <source>
        <strain>CFT073 / ATCC 700928 / UPEC</strain>
    </source>
</reference>
<feature type="chain" id="PRO_0000136003" description="Shikimate dehydrogenase (NADP(+))">
    <location>
        <begin position="1"/>
        <end position="272"/>
    </location>
</feature>
<feature type="active site" description="Proton acceptor" evidence="1">
    <location>
        <position position="65"/>
    </location>
</feature>
<feature type="binding site" evidence="1">
    <location>
        <begin position="14"/>
        <end position="16"/>
    </location>
    <ligand>
        <name>shikimate</name>
        <dbReference type="ChEBI" id="CHEBI:36208"/>
    </ligand>
</feature>
<feature type="binding site" evidence="1">
    <location>
        <position position="61"/>
    </location>
    <ligand>
        <name>shikimate</name>
        <dbReference type="ChEBI" id="CHEBI:36208"/>
    </ligand>
</feature>
<feature type="binding site" evidence="1">
    <location>
        <position position="77"/>
    </location>
    <ligand>
        <name>NADP(+)</name>
        <dbReference type="ChEBI" id="CHEBI:58349"/>
    </ligand>
</feature>
<feature type="binding site" evidence="1">
    <location>
        <position position="86"/>
    </location>
    <ligand>
        <name>shikimate</name>
        <dbReference type="ChEBI" id="CHEBI:36208"/>
    </ligand>
</feature>
<feature type="binding site" evidence="1">
    <location>
        <position position="102"/>
    </location>
    <ligand>
        <name>shikimate</name>
        <dbReference type="ChEBI" id="CHEBI:36208"/>
    </ligand>
</feature>
<feature type="binding site" evidence="1">
    <location>
        <begin position="126"/>
        <end position="130"/>
    </location>
    <ligand>
        <name>NADP(+)</name>
        <dbReference type="ChEBI" id="CHEBI:58349"/>
    </ligand>
</feature>
<feature type="binding site" evidence="1">
    <location>
        <begin position="149"/>
        <end position="154"/>
    </location>
    <ligand>
        <name>NADP(+)</name>
        <dbReference type="ChEBI" id="CHEBI:58349"/>
    </ligand>
</feature>
<feature type="binding site" evidence="1">
    <location>
        <position position="213"/>
    </location>
    <ligand>
        <name>NADP(+)</name>
        <dbReference type="ChEBI" id="CHEBI:58349"/>
    </ligand>
</feature>
<feature type="binding site" evidence="1">
    <location>
        <position position="215"/>
    </location>
    <ligand>
        <name>shikimate</name>
        <dbReference type="ChEBI" id="CHEBI:36208"/>
    </ligand>
</feature>
<feature type="binding site" evidence="1">
    <location>
        <position position="237"/>
    </location>
    <ligand>
        <name>NADP(+)</name>
        <dbReference type="ChEBI" id="CHEBI:58349"/>
    </ligand>
</feature>
<proteinExistence type="inferred from homology"/>
<keyword id="KW-0028">Amino-acid biosynthesis</keyword>
<keyword id="KW-0057">Aromatic amino acid biosynthesis</keyword>
<keyword id="KW-0521">NADP</keyword>
<keyword id="KW-0560">Oxidoreductase</keyword>
<keyword id="KW-1185">Reference proteome</keyword>
<sequence length="272" mass="29415">METYAVFGNPIAHSKSPFIHQQFAQQLNIEHPYGRVLAPINDFINTLNTFFSAGGKGANVTVPFKEEAFARADELTERAALAGAVNTLKRLEDGRLLGDNTDGIGLLSDLERLSFIRPGLRILLIGAGGASRGVLLPLLSLDCAVTITNRTVSRAEELAKLFAHTGSIHALGMDELEGHEFDLIINATSSGISGDIPAIPPSLIHPGIYCYDMFYQKGKTPFLAWCEQRGSKRTADGLGMLVAQAAHAFLLWHGVLPDVEPVIKLLQQELSA</sequence>